<accession>Q3MAP8</accession>
<keyword id="KW-0067">ATP-binding</keyword>
<keyword id="KW-0131">Cell cycle</keyword>
<keyword id="KW-0132">Cell division</keyword>
<keyword id="KW-0133">Cell shape</keyword>
<keyword id="KW-0961">Cell wall biogenesis/degradation</keyword>
<keyword id="KW-0963">Cytoplasm</keyword>
<keyword id="KW-0436">Ligase</keyword>
<keyword id="KW-0547">Nucleotide-binding</keyword>
<keyword id="KW-0573">Peptidoglycan synthesis</keyword>
<evidence type="ECO:0000255" key="1">
    <source>
        <dbReference type="HAMAP-Rule" id="MF_00046"/>
    </source>
</evidence>
<protein>
    <recommendedName>
        <fullName evidence="1">UDP-N-acetylmuramate--L-alanine ligase</fullName>
        <ecNumber evidence="1">6.3.2.8</ecNumber>
    </recommendedName>
    <alternativeName>
        <fullName evidence="1">UDP-N-acetylmuramoyl-L-alanine synthetase</fullName>
    </alternativeName>
</protein>
<feature type="chain" id="PRO_0000242540" description="UDP-N-acetylmuramate--L-alanine ligase">
    <location>
        <begin position="1"/>
        <end position="494"/>
    </location>
</feature>
<feature type="binding site" evidence="1">
    <location>
        <begin position="140"/>
        <end position="146"/>
    </location>
    <ligand>
        <name>ATP</name>
        <dbReference type="ChEBI" id="CHEBI:30616"/>
    </ligand>
</feature>
<sequence>MNNSVDFGGRPFHFIGIGGIGMSALAYVLAKRQLPVSGSDLRPNHITRKLESIGAHIFSRQEASNLEFFGSKVSSTEIELNTQEMFPLGKSTLPQVVCSTAINSNNLEYQAAIELGCPILHRSDVLAALINDYHSVAVAGTHGKTTTSSMIGYMLLEAGLDPTIIVGGEVNAWEGNARLGQSPYLVAEADESDGSLVKHAPEIGIITNIELDHPDHYDTLEEVVDIFQTFAKGCKTLIGSVDCATVRELLRTAASDRQQPTITYSLHQDTEADYTVTNIDCRADGTTALVWEKGKALGVLKLKLLSRHNLSNALAAVAVGRLVGLEFGEIAKGIAGFEGARRRFEFRGEVDGITFIDDYAHHPSEIRATLAAARLQARPGQRVVAIFQPHRYSRTLTFLEEFSESFSHADLVVLTDIYSAGEPNLGLISGEQLAEKIAQEHPQVVYQPTLSTVCEYLLKNLRPGDLALFLGAGNLNQAIPEIITTLCEPATATL</sequence>
<comment type="function">
    <text evidence="1">Cell wall formation.</text>
</comment>
<comment type="catalytic activity">
    <reaction evidence="1">
        <text>UDP-N-acetyl-alpha-D-muramate + L-alanine + ATP = UDP-N-acetyl-alpha-D-muramoyl-L-alanine + ADP + phosphate + H(+)</text>
        <dbReference type="Rhea" id="RHEA:23372"/>
        <dbReference type="ChEBI" id="CHEBI:15378"/>
        <dbReference type="ChEBI" id="CHEBI:30616"/>
        <dbReference type="ChEBI" id="CHEBI:43474"/>
        <dbReference type="ChEBI" id="CHEBI:57972"/>
        <dbReference type="ChEBI" id="CHEBI:70757"/>
        <dbReference type="ChEBI" id="CHEBI:83898"/>
        <dbReference type="ChEBI" id="CHEBI:456216"/>
        <dbReference type="EC" id="6.3.2.8"/>
    </reaction>
</comment>
<comment type="pathway">
    <text evidence="1">Cell wall biogenesis; peptidoglycan biosynthesis.</text>
</comment>
<comment type="subcellular location">
    <subcellularLocation>
        <location evidence="1">Cytoplasm</location>
    </subcellularLocation>
</comment>
<comment type="similarity">
    <text evidence="1">Belongs to the MurCDEF family.</text>
</comment>
<proteinExistence type="inferred from homology"/>
<reference key="1">
    <citation type="journal article" date="2014" name="Stand. Genomic Sci.">
        <title>Complete genome sequence of Anabaena variabilis ATCC 29413.</title>
        <authorList>
            <person name="Thiel T."/>
            <person name="Pratte B.S."/>
            <person name="Zhong J."/>
            <person name="Goodwin L."/>
            <person name="Copeland A."/>
            <person name="Lucas S."/>
            <person name="Han C."/>
            <person name="Pitluck S."/>
            <person name="Land M.L."/>
            <person name="Kyrpides N.C."/>
            <person name="Woyke T."/>
        </authorList>
    </citation>
    <scope>NUCLEOTIDE SEQUENCE [LARGE SCALE GENOMIC DNA]</scope>
    <source>
        <strain>ATCC 29413 / PCC 7937</strain>
    </source>
</reference>
<name>MURC_TRIV2</name>
<gene>
    <name evidence="1" type="primary">murC</name>
    <name type="ordered locus">Ava_2320</name>
</gene>
<organism>
    <name type="scientific">Trichormus variabilis (strain ATCC 29413 / PCC 7937)</name>
    <name type="common">Anabaena variabilis</name>
    <dbReference type="NCBI Taxonomy" id="240292"/>
    <lineage>
        <taxon>Bacteria</taxon>
        <taxon>Bacillati</taxon>
        <taxon>Cyanobacteriota</taxon>
        <taxon>Cyanophyceae</taxon>
        <taxon>Nostocales</taxon>
        <taxon>Nostocaceae</taxon>
        <taxon>Trichormus</taxon>
    </lineage>
</organism>
<dbReference type="EC" id="6.3.2.8" evidence="1"/>
<dbReference type="EMBL" id="CP000117">
    <property type="protein sequence ID" value="ABA21938.1"/>
    <property type="molecule type" value="Genomic_DNA"/>
</dbReference>
<dbReference type="SMR" id="Q3MAP8"/>
<dbReference type="STRING" id="240292.Ava_2320"/>
<dbReference type="KEGG" id="ava:Ava_2320"/>
<dbReference type="eggNOG" id="COG0773">
    <property type="taxonomic scope" value="Bacteria"/>
</dbReference>
<dbReference type="HOGENOM" id="CLU_028104_2_2_3"/>
<dbReference type="UniPathway" id="UPA00219"/>
<dbReference type="Proteomes" id="UP000002533">
    <property type="component" value="Chromosome"/>
</dbReference>
<dbReference type="GO" id="GO:0005737">
    <property type="term" value="C:cytoplasm"/>
    <property type="evidence" value="ECO:0007669"/>
    <property type="project" value="UniProtKB-SubCell"/>
</dbReference>
<dbReference type="GO" id="GO:0005524">
    <property type="term" value="F:ATP binding"/>
    <property type="evidence" value="ECO:0007669"/>
    <property type="project" value="UniProtKB-UniRule"/>
</dbReference>
<dbReference type="GO" id="GO:0008763">
    <property type="term" value="F:UDP-N-acetylmuramate-L-alanine ligase activity"/>
    <property type="evidence" value="ECO:0007669"/>
    <property type="project" value="UniProtKB-UniRule"/>
</dbReference>
<dbReference type="GO" id="GO:0051301">
    <property type="term" value="P:cell division"/>
    <property type="evidence" value="ECO:0007669"/>
    <property type="project" value="UniProtKB-KW"/>
</dbReference>
<dbReference type="GO" id="GO:0071555">
    <property type="term" value="P:cell wall organization"/>
    <property type="evidence" value="ECO:0007669"/>
    <property type="project" value="UniProtKB-KW"/>
</dbReference>
<dbReference type="GO" id="GO:0009252">
    <property type="term" value="P:peptidoglycan biosynthetic process"/>
    <property type="evidence" value="ECO:0007669"/>
    <property type="project" value="UniProtKB-UniRule"/>
</dbReference>
<dbReference type="GO" id="GO:0008360">
    <property type="term" value="P:regulation of cell shape"/>
    <property type="evidence" value="ECO:0007669"/>
    <property type="project" value="UniProtKB-KW"/>
</dbReference>
<dbReference type="Gene3D" id="3.90.190.20">
    <property type="entry name" value="Mur ligase, C-terminal domain"/>
    <property type="match status" value="1"/>
</dbReference>
<dbReference type="Gene3D" id="3.40.1190.10">
    <property type="entry name" value="Mur-like, catalytic domain"/>
    <property type="match status" value="1"/>
</dbReference>
<dbReference type="Gene3D" id="3.40.50.720">
    <property type="entry name" value="NAD(P)-binding Rossmann-like Domain"/>
    <property type="match status" value="1"/>
</dbReference>
<dbReference type="HAMAP" id="MF_00046">
    <property type="entry name" value="MurC"/>
    <property type="match status" value="1"/>
</dbReference>
<dbReference type="InterPro" id="IPR036565">
    <property type="entry name" value="Mur-like_cat_sf"/>
</dbReference>
<dbReference type="InterPro" id="IPR004101">
    <property type="entry name" value="Mur_ligase_C"/>
</dbReference>
<dbReference type="InterPro" id="IPR036615">
    <property type="entry name" value="Mur_ligase_C_dom_sf"/>
</dbReference>
<dbReference type="InterPro" id="IPR013221">
    <property type="entry name" value="Mur_ligase_cen"/>
</dbReference>
<dbReference type="InterPro" id="IPR000713">
    <property type="entry name" value="Mur_ligase_N"/>
</dbReference>
<dbReference type="InterPro" id="IPR050061">
    <property type="entry name" value="MurCDEF_pg_biosynth"/>
</dbReference>
<dbReference type="InterPro" id="IPR005758">
    <property type="entry name" value="UDP-N-AcMur_Ala_ligase_MurC"/>
</dbReference>
<dbReference type="NCBIfam" id="TIGR01082">
    <property type="entry name" value="murC"/>
    <property type="match status" value="1"/>
</dbReference>
<dbReference type="PANTHER" id="PTHR43445:SF3">
    <property type="entry name" value="UDP-N-ACETYLMURAMATE--L-ALANINE LIGASE"/>
    <property type="match status" value="1"/>
</dbReference>
<dbReference type="PANTHER" id="PTHR43445">
    <property type="entry name" value="UDP-N-ACETYLMURAMATE--L-ALANINE LIGASE-RELATED"/>
    <property type="match status" value="1"/>
</dbReference>
<dbReference type="Pfam" id="PF01225">
    <property type="entry name" value="Mur_ligase"/>
    <property type="match status" value="1"/>
</dbReference>
<dbReference type="Pfam" id="PF02875">
    <property type="entry name" value="Mur_ligase_C"/>
    <property type="match status" value="1"/>
</dbReference>
<dbReference type="Pfam" id="PF08245">
    <property type="entry name" value="Mur_ligase_M"/>
    <property type="match status" value="1"/>
</dbReference>
<dbReference type="SUPFAM" id="SSF51984">
    <property type="entry name" value="MurCD N-terminal domain"/>
    <property type="match status" value="1"/>
</dbReference>
<dbReference type="SUPFAM" id="SSF53623">
    <property type="entry name" value="MurD-like peptide ligases, catalytic domain"/>
    <property type="match status" value="1"/>
</dbReference>
<dbReference type="SUPFAM" id="SSF53244">
    <property type="entry name" value="MurD-like peptide ligases, peptide-binding domain"/>
    <property type="match status" value="1"/>
</dbReference>